<sequence>MNLLSLLLILLGIILGVVGGYVVARNLLLQKQSQARQTAEDIVNQAHKEADNIKKEKLLEAKEENQILREQTEAELRERRSELQRQETRLLQKEENLERKSDLLDKKDEILEQKESKIEEKQQQVDAKESSVQTLIMKHEQELERISGLTQEEAINEQLQRVEEELSQDIAVLVKEKEKEAKEKVDKTAKELLATAVQRLAADHTSESTVSVVNLPNDEMKGRIIGREGRNIRTLETLTGIDLIIDDTPEAVILSGFDPIRREIARTALVNLVSDGRIHPGRIEDMVEKARKEVDDIIREAGEQATFEVNAHNMHPDLVKIVGRLNYRTSYGQNVLKHSIEVAHLASMLAAELGEDETLAKRAGLLHDVGKAIDHEVEGSHVEIGVELAKKYGENETVINAIHSHHGDVEPTSIISILVAAADALSAARPGARKETLENYIRRLERLETLSESYDGVEKAFAIQAGREIRVIVSPEEIDDLKSYRLARDIKNQIEDELQYPGHIKVTVVRETRAVEYAK</sequence>
<comment type="function">
    <text evidence="1">Endoribonuclease that initiates mRNA decay.</text>
</comment>
<comment type="subcellular location">
    <subcellularLocation>
        <location evidence="1">Cell membrane</location>
        <topology evidence="1">Single-pass membrane protein</topology>
    </subcellularLocation>
</comment>
<comment type="similarity">
    <text evidence="1">Belongs to the RNase Y family.</text>
</comment>
<gene>
    <name evidence="1" type="primary">rny</name>
    <name type="synonym">cvfA</name>
    <name type="ordered locus">MW1169</name>
</gene>
<feature type="chain" id="PRO_0000163791" description="Ribonuclease Y">
    <location>
        <begin position="1"/>
        <end position="519"/>
    </location>
</feature>
<feature type="transmembrane region" description="Helical" evidence="1">
    <location>
        <begin position="3"/>
        <end position="23"/>
    </location>
</feature>
<feature type="domain" description="KH" evidence="1">
    <location>
        <begin position="209"/>
        <end position="269"/>
    </location>
</feature>
<feature type="domain" description="HD" evidence="2">
    <location>
        <begin position="335"/>
        <end position="428"/>
    </location>
</feature>
<name>RNY_STAAW</name>
<organism>
    <name type="scientific">Staphylococcus aureus (strain MW2)</name>
    <dbReference type="NCBI Taxonomy" id="196620"/>
    <lineage>
        <taxon>Bacteria</taxon>
        <taxon>Bacillati</taxon>
        <taxon>Bacillota</taxon>
        <taxon>Bacilli</taxon>
        <taxon>Bacillales</taxon>
        <taxon>Staphylococcaceae</taxon>
        <taxon>Staphylococcus</taxon>
    </lineage>
</organism>
<proteinExistence type="inferred from homology"/>
<evidence type="ECO:0000255" key="1">
    <source>
        <dbReference type="HAMAP-Rule" id="MF_00335"/>
    </source>
</evidence>
<evidence type="ECO:0000255" key="2">
    <source>
        <dbReference type="PROSITE-ProRule" id="PRU01175"/>
    </source>
</evidence>
<reference key="1">
    <citation type="journal article" date="2002" name="Lancet">
        <title>Genome and virulence determinants of high virulence community-acquired MRSA.</title>
        <authorList>
            <person name="Baba T."/>
            <person name="Takeuchi F."/>
            <person name="Kuroda M."/>
            <person name="Yuzawa H."/>
            <person name="Aoki K."/>
            <person name="Oguchi A."/>
            <person name="Nagai Y."/>
            <person name="Iwama N."/>
            <person name="Asano K."/>
            <person name="Naimi T."/>
            <person name="Kuroda H."/>
            <person name="Cui L."/>
            <person name="Yamamoto K."/>
            <person name="Hiramatsu K."/>
        </authorList>
    </citation>
    <scope>NUCLEOTIDE SEQUENCE [LARGE SCALE GENOMIC DNA]</scope>
    <source>
        <strain>MW2</strain>
    </source>
</reference>
<accession>P67279</accession>
<accession>Q99UI7</accession>
<protein>
    <recommendedName>
        <fullName evidence="1">Ribonuclease Y</fullName>
        <shortName evidence="1">RNase Y</shortName>
        <ecNumber evidence="1">3.1.-.-</ecNumber>
    </recommendedName>
    <alternativeName>
        <fullName>Conserved virulence factor A</fullName>
    </alternativeName>
</protein>
<dbReference type="EC" id="3.1.-.-" evidence="1"/>
<dbReference type="EMBL" id="BA000033">
    <property type="protein sequence ID" value="BAB95034.1"/>
    <property type="molecule type" value="Genomic_DNA"/>
</dbReference>
<dbReference type="RefSeq" id="WP_001050913.1">
    <property type="nucleotide sequence ID" value="NC_003923.1"/>
</dbReference>
<dbReference type="SMR" id="P67279"/>
<dbReference type="KEGG" id="sam:MW1169"/>
<dbReference type="HOGENOM" id="CLU_028328_1_0_9"/>
<dbReference type="GO" id="GO:0005886">
    <property type="term" value="C:plasma membrane"/>
    <property type="evidence" value="ECO:0007669"/>
    <property type="project" value="UniProtKB-SubCell"/>
</dbReference>
<dbReference type="GO" id="GO:0003723">
    <property type="term" value="F:RNA binding"/>
    <property type="evidence" value="ECO:0007669"/>
    <property type="project" value="UniProtKB-UniRule"/>
</dbReference>
<dbReference type="GO" id="GO:0004521">
    <property type="term" value="F:RNA endonuclease activity"/>
    <property type="evidence" value="ECO:0007669"/>
    <property type="project" value="UniProtKB-UniRule"/>
</dbReference>
<dbReference type="GO" id="GO:0006402">
    <property type="term" value="P:mRNA catabolic process"/>
    <property type="evidence" value="ECO:0007669"/>
    <property type="project" value="UniProtKB-UniRule"/>
</dbReference>
<dbReference type="CDD" id="cd00077">
    <property type="entry name" value="HDc"/>
    <property type="match status" value="1"/>
</dbReference>
<dbReference type="CDD" id="cd22431">
    <property type="entry name" value="KH-I_RNaseY"/>
    <property type="match status" value="1"/>
</dbReference>
<dbReference type="FunFam" id="1.10.3210.10:FF:000003">
    <property type="entry name" value="Ribonuclease Y"/>
    <property type="match status" value="1"/>
</dbReference>
<dbReference type="FunFam" id="3.30.1370.10:FF:000006">
    <property type="entry name" value="Ribonuclease Y"/>
    <property type="match status" value="1"/>
</dbReference>
<dbReference type="Gene3D" id="1.10.3210.10">
    <property type="entry name" value="Hypothetical protein af1432"/>
    <property type="match status" value="1"/>
</dbReference>
<dbReference type="Gene3D" id="3.30.1370.10">
    <property type="entry name" value="K Homology domain, type 1"/>
    <property type="match status" value="1"/>
</dbReference>
<dbReference type="HAMAP" id="MF_00335">
    <property type="entry name" value="RNase_Y"/>
    <property type="match status" value="1"/>
</dbReference>
<dbReference type="InterPro" id="IPR003607">
    <property type="entry name" value="HD/PDEase_dom"/>
</dbReference>
<dbReference type="InterPro" id="IPR006674">
    <property type="entry name" value="HD_domain"/>
</dbReference>
<dbReference type="InterPro" id="IPR006675">
    <property type="entry name" value="HDIG_dom"/>
</dbReference>
<dbReference type="InterPro" id="IPR004087">
    <property type="entry name" value="KH_dom"/>
</dbReference>
<dbReference type="InterPro" id="IPR004088">
    <property type="entry name" value="KH_dom_type_1"/>
</dbReference>
<dbReference type="InterPro" id="IPR036612">
    <property type="entry name" value="KH_dom_type_1_sf"/>
</dbReference>
<dbReference type="InterPro" id="IPR017705">
    <property type="entry name" value="Ribonuclease_Y"/>
</dbReference>
<dbReference type="InterPro" id="IPR022711">
    <property type="entry name" value="RNase_Y_N"/>
</dbReference>
<dbReference type="NCBIfam" id="TIGR00277">
    <property type="entry name" value="HDIG"/>
    <property type="match status" value="1"/>
</dbReference>
<dbReference type="NCBIfam" id="TIGR03319">
    <property type="entry name" value="RNase_Y"/>
    <property type="match status" value="1"/>
</dbReference>
<dbReference type="PANTHER" id="PTHR12826">
    <property type="entry name" value="RIBONUCLEASE Y"/>
    <property type="match status" value="1"/>
</dbReference>
<dbReference type="PANTHER" id="PTHR12826:SF15">
    <property type="entry name" value="RIBONUCLEASE Y"/>
    <property type="match status" value="1"/>
</dbReference>
<dbReference type="Pfam" id="PF01966">
    <property type="entry name" value="HD"/>
    <property type="match status" value="1"/>
</dbReference>
<dbReference type="Pfam" id="PF00013">
    <property type="entry name" value="KH_1"/>
    <property type="match status" value="1"/>
</dbReference>
<dbReference type="Pfam" id="PF12072">
    <property type="entry name" value="RNase_Y_N"/>
    <property type="match status" value="1"/>
</dbReference>
<dbReference type="SMART" id="SM00471">
    <property type="entry name" value="HDc"/>
    <property type="match status" value="1"/>
</dbReference>
<dbReference type="SMART" id="SM00322">
    <property type="entry name" value="KH"/>
    <property type="match status" value="1"/>
</dbReference>
<dbReference type="SUPFAM" id="SSF54791">
    <property type="entry name" value="Eukaryotic type KH-domain (KH-domain type I)"/>
    <property type="match status" value="1"/>
</dbReference>
<dbReference type="SUPFAM" id="SSF109604">
    <property type="entry name" value="HD-domain/PDEase-like"/>
    <property type="match status" value="1"/>
</dbReference>
<dbReference type="PROSITE" id="PS51831">
    <property type="entry name" value="HD"/>
    <property type="match status" value="1"/>
</dbReference>
<dbReference type="PROSITE" id="PS50084">
    <property type="entry name" value="KH_TYPE_1"/>
    <property type="match status" value="1"/>
</dbReference>
<keyword id="KW-1003">Cell membrane</keyword>
<keyword id="KW-0255">Endonuclease</keyword>
<keyword id="KW-0378">Hydrolase</keyword>
<keyword id="KW-0472">Membrane</keyword>
<keyword id="KW-0540">Nuclease</keyword>
<keyword id="KW-0694">RNA-binding</keyword>
<keyword id="KW-0812">Transmembrane</keyword>
<keyword id="KW-1133">Transmembrane helix</keyword>
<keyword id="KW-0843">Virulence</keyword>